<gene>
    <name evidence="1" type="primary">rpsT</name>
    <name type="ordered locus">HAPS_1351</name>
</gene>
<name>RS20_GLAP5</name>
<organism>
    <name type="scientific">Glaesserella parasuis serovar 5 (strain SH0165)</name>
    <name type="common">Haemophilus parasuis</name>
    <dbReference type="NCBI Taxonomy" id="557723"/>
    <lineage>
        <taxon>Bacteria</taxon>
        <taxon>Pseudomonadati</taxon>
        <taxon>Pseudomonadota</taxon>
        <taxon>Gammaproteobacteria</taxon>
        <taxon>Pasteurellales</taxon>
        <taxon>Pasteurellaceae</taxon>
        <taxon>Glaesserella</taxon>
    </lineage>
</organism>
<keyword id="KW-1185">Reference proteome</keyword>
<keyword id="KW-0687">Ribonucleoprotein</keyword>
<keyword id="KW-0689">Ribosomal protein</keyword>
<keyword id="KW-0694">RNA-binding</keyword>
<keyword id="KW-0699">rRNA-binding</keyword>
<proteinExistence type="inferred from homology"/>
<sequence length="87" mass="9581">MANIKSAQKRAVQSEKRRQHNASQRSMMRTFIKKVYAAVATGDKAASEAAFVEMQKVVDRMASKGLIHANKAANHKSKLAAQIKKLA</sequence>
<feature type="chain" id="PRO_1000194247" description="Small ribosomal subunit protein bS20">
    <location>
        <begin position="1"/>
        <end position="87"/>
    </location>
</feature>
<feature type="region of interest" description="Disordered" evidence="2">
    <location>
        <begin position="1"/>
        <end position="26"/>
    </location>
</feature>
<comment type="function">
    <text evidence="1">Binds directly to 16S ribosomal RNA.</text>
</comment>
<comment type="similarity">
    <text evidence="1">Belongs to the bacterial ribosomal protein bS20 family.</text>
</comment>
<dbReference type="EMBL" id="CP001321">
    <property type="protein sequence ID" value="ACL32931.1"/>
    <property type="molecule type" value="Genomic_DNA"/>
</dbReference>
<dbReference type="RefSeq" id="WP_005713402.1">
    <property type="nucleotide sequence ID" value="NC_011852.1"/>
</dbReference>
<dbReference type="SMR" id="B8F6H9"/>
<dbReference type="STRING" id="557723.HAPS_1351"/>
<dbReference type="GeneID" id="66619463"/>
<dbReference type="KEGG" id="hap:HAPS_1351"/>
<dbReference type="HOGENOM" id="CLU_160655_4_0_6"/>
<dbReference type="Proteomes" id="UP000006743">
    <property type="component" value="Chromosome"/>
</dbReference>
<dbReference type="GO" id="GO:0005829">
    <property type="term" value="C:cytosol"/>
    <property type="evidence" value="ECO:0007669"/>
    <property type="project" value="TreeGrafter"/>
</dbReference>
<dbReference type="GO" id="GO:0015935">
    <property type="term" value="C:small ribosomal subunit"/>
    <property type="evidence" value="ECO:0007669"/>
    <property type="project" value="TreeGrafter"/>
</dbReference>
<dbReference type="GO" id="GO:0070181">
    <property type="term" value="F:small ribosomal subunit rRNA binding"/>
    <property type="evidence" value="ECO:0007669"/>
    <property type="project" value="TreeGrafter"/>
</dbReference>
<dbReference type="GO" id="GO:0003735">
    <property type="term" value="F:structural constituent of ribosome"/>
    <property type="evidence" value="ECO:0007669"/>
    <property type="project" value="InterPro"/>
</dbReference>
<dbReference type="GO" id="GO:0006412">
    <property type="term" value="P:translation"/>
    <property type="evidence" value="ECO:0007669"/>
    <property type="project" value="UniProtKB-UniRule"/>
</dbReference>
<dbReference type="FunFam" id="1.20.58.110:FF:000001">
    <property type="entry name" value="30S ribosomal protein S20"/>
    <property type="match status" value="1"/>
</dbReference>
<dbReference type="Gene3D" id="1.20.58.110">
    <property type="entry name" value="Ribosomal protein S20"/>
    <property type="match status" value="1"/>
</dbReference>
<dbReference type="HAMAP" id="MF_00500">
    <property type="entry name" value="Ribosomal_bS20"/>
    <property type="match status" value="1"/>
</dbReference>
<dbReference type="InterPro" id="IPR002583">
    <property type="entry name" value="Ribosomal_bS20"/>
</dbReference>
<dbReference type="InterPro" id="IPR036510">
    <property type="entry name" value="Ribosomal_bS20_sf"/>
</dbReference>
<dbReference type="NCBIfam" id="TIGR00029">
    <property type="entry name" value="S20"/>
    <property type="match status" value="1"/>
</dbReference>
<dbReference type="PANTHER" id="PTHR33398">
    <property type="entry name" value="30S RIBOSOMAL PROTEIN S20"/>
    <property type="match status" value="1"/>
</dbReference>
<dbReference type="PANTHER" id="PTHR33398:SF1">
    <property type="entry name" value="SMALL RIBOSOMAL SUBUNIT PROTEIN BS20C"/>
    <property type="match status" value="1"/>
</dbReference>
<dbReference type="Pfam" id="PF01649">
    <property type="entry name" value="Ribosomal_S20p"/>
    <property type="match status" value="1"/>
</dbReference>
<dbReference type="SUPFAM" id="SSF46992">
    <property type="entry name" value="Ribosomal protein S20"/>
    <property type="match status" value="1"/>
</dbReference>
<protein>
    <recommendedName>
        <fullName evidence="1">Small ribosomal subunit protein bS20</fullName>
    </recommendedName>
    <alternativeName>
        <fullName evidence="3">30S ribosomal protein S20</fullName>
    </alternativeName>
</protein>
<evidence type="ECO:0000255" key="1">
    <source>
        <dbReference type="HAMAP-Rule" id="MF_00500"/>
    </source>
</evidence>
<evidence type="ECO:0000256" key="2">
    <source>
        <dbReference type="SAM" id="MobiDB-lite"/>
    </source>
</evidence>
<evidence type="ECO:0000305" key="3"/>
<accession>B8F6H9</accession>
<reference key="1">
    <citation type="journal article" date="2009" name="J. Bacteriol.">
        <title>Complete genome sequence of Haemophilus parasuis SH0165.</title>
        <authorList>
            <person name="Yue M."/>
            <person name="Yang F."/>
            <person name="Yang J."/>
            <person name="Bei W."/>
            <person name="Cai X."/>
            <person name="Chen L."/>
            <person name="Dong J."/>
            <person name="Zhou R."/>
            <person name="Jin M."/>
            <person name="Jin Q."/>
            <person name="Chen H."/>
        </authorList>
    </citation>
    <scope>NUCLEOTIDE SEQUENCE [LARGE SCALE GENOMIC DNA]</scope>
    <source>
        <strain>SH0165</strain>
    </source>
</reference>